<dbReference type="EC" id="2.1.2.9" evidence="1"/>
<dbReference type="EMBL" id="CP000825">
    <property type="protein sequence ID" value="ABV50675.1"/>
    <property type="molecule type" value="Genomic_DNA"/>
</dbReference>
<dbReference type="RefSeq" id="WP_012007760.1">
    <property type="nucleotide sequence ID" value="NC_009840.1"/>
</dbReference>
<dbReference type="SMR" id="A8G4Z4"/>
<dbReference type="STRING" id="93060.P9215_10601"/>
<dbReference type="KEGG" id="pmh:P9215_10601"/>
<dbReference type="eggNOG" id="COG0223">
    <property type="taxonomic scope" value="Bacteria"/>
</dbReference>
<dbReference type="HOGENOM" id="CLU_033347_1_1_3"/>
<dbReference type="OrthoDB" id="9802815at2"/>
<dbReference type="Proteomes" id="UP000002014">
    <property type="component" value="Chromosome"/>
</dbReference>
<dbReference type="GO" id="GO:0005829">
    <property type="term" value="C:cytosol"/>
    <property type="evidence" value="ECO:0007669"/>
    <property type="project" value="TreeGrafter"/>
</dbReference>
<dbReference type="GO" id="GO:0004479">
    <property type="term" value="F:methionyl-tRNA formyltransferase activity"/>
    <property type="evidence" value="ECO:0007669"/>
    <property type="project" value="UniProtKB-UniRule"/>
</dbReference>
<dbReference type="CDD" id="cd08646">
    <property type="entry name" value="FMT_core_Met-tRNA-FMT_N"/>
    <property type="match status" value="1"/>
</dbReference>
<dbReference type="CDD" id="cd08704">
    <property type="entry name" value="Met_tRNA_FMT_C"/>
    <property type="match status" value="1"/>
</dbReference>
<dbReference type="Gene3D" id="3.40.50.12230">
    <property type="match status" value="1"/>
</dbReference>
<dbReference type="HAMAP" id="MF_00182">
    <property type="entry name" value="Formyl_trans"/>
    <property type="match status" value="1"/>
</dbReference>
<dbReference type="InterPro" id="IPR005794">
    <property type="entry name" value="Fmt"/>
</dbReference>
<dbReference type="InterPro" id="IPR005793">
    <property type="entry name" value="Formyl_trans_C"/>
</dbReference>
<dbReference type="InterPro" id="IPR002376">
    <property type="entry name" value="Formyl_transf_N"/>
</dbReference>
<dbReference type="InterPro" id="IPR036477">
    <property type="entry name" value="Formyl_transf_N_sf"/>
</dbReference>
<dbReference type="InterPro" id="IPR011034">
    <property type="entry name" value="Formyl_transferase-like_C_sf"/>
</dbReference>
<dbReference type="InterPro" id="IPR044135">
    <property type="entry name" value="Met-tRNA-FMT_C"/>
</dbReference>
<dbReference type="InterPro" id="IPR041711">
    <property type="entry name" value="Met-tRNA-FMT_N"/>
</dbReference>
<dbReference type="NCBIfam" id="TIGR00460">
    <property type="entry name" value="fmt"/>
    <property type="match status" value="1"/>
</dbReference>
<dbReference type="PANTHER" id="PTHR11138">
    <property type="entry name" value="METHIONYL-TRNA FORMYLTRANSFERASE"/>
    <property type="match status" value="1"/>
</dbReference>
<dbReference type="PANTHER" id="PTHR11138:SF5">
    <property type="entry name" value="METHIONYL-TRNA FORMYLTRANSFERASE, MITOCHONDRIAL"/>
    <property type="match status" value="1"/>
</dbReference>
<dbReference type="Pfam" id="PF02911">
    <property type="entry name" value="Formyl_trans_C"/>
    <property type="match status" value="1"/>
</dbReference>
<dbReference type="Pfam" id="PF00551">
    <property type="entry name" value="Formyl_trans_N"/>
    <property type="match status" value="1"/>
</dbReference>
<dbReference type="SUPFAM" id="SSF50486">
    <property type="entry name" value="FMT C-terminal domain-like"/>
    <property type="match status" value="1"/>
</dbReference>
<dbReference type="SUPFAM" id="SSF53328">
    <property type="entry name" value="Formyltransferase"/>
    <property type="match status" value="1"/>
</dbReference>
<proteinExistence type="inferred from homology"/>
<name>FMT_PROM2</name>
<reference key="1">
    <citation type="journal article" date="2007" name="PLoS Genet.">
        <title>Patterns and implications of gene gain and loss in the evolution of Prochlorococcus.</title>
        <authorList>
            <person name="Kettler G.C."/>
            <person name="Martiny A.C."/>
            <person name="Huang K."/>
            <person name="Zucker J."/>
            <person name="Coleman M.L."/>
            <person name="Rodrigue S."/>
            <person name="Chen F."/>
            <person name="Lapidus A."/>
            <person name="Ferriera S."/>
            <person name="Johnson J."/>
            <person name="Steglich C."/>
            <person name="Church G.M."/>
            <person name="Richardson P."/>
            <person name="Chisholm S.W."/>
        </authorList>
    </citation>
    <scope>NUCLEOTIDE SEQUENCE [LARGE SCALE GENOMIC DNA]</scope>
    <source>
        <strain>MIT 9215</strain>
    </source>
</reference>
<organism>
    <name type="scientific">Prochlorococcus marinus (strain MIT 9215)</name>
    <dbReference type="NCBI Taxonomy" id="93060"/>
    <lineage>
        <taxon>Bacteria</taxon>
        <taxon>Bacillati</taxon>
        <taxon>Cyanobacteriota</taxon>
        <taxon>Cyanophyceae</taxon>
        <taxon>Synechococcales</taxon>
        <taxon>Prochlorococcaceae</taxon>
        <taxon>Prochlorococcus</taxon>
    </lineage>
</organism>
<feature type="chain" id="PRO_1000058404" description="Methionyl-tRNA formyltransferase">
    <location>
        <begin position="1"/>
        <end position="328"/>
    </location>
</feature>
<feature type="binding site" evidence="1">
    <location>
        <begin position="110"/>
        <end position="113"/>
    </location>
    <ligand>
        <name>(6S)-5,6,7,8-tetrahydrofolate</name>
        <dbReference type="ChEBI" id="CHEBI:57453"/>
    </ligand>
</feature>
<comment type="function">
    <text evidence="1">Attaches a formyl group to the free amino group of methionyl-tRNA(fMet). The formyl group appears to play a dual role in the initiator identity of N-formylmethionyl-tRNA by promoting its recognition by IF2 and preventing the misappropriation of this tRNA by the elongation apparatus.</text>
</comment>
<comment type="catalytic activity">
    <reaction evidence="1">
        <text>L-methionyl-tRNA(fMet) + (6R)-10-formyltetrahydrofolate = N-formyl-L-methionyl-tRNA(fMet) + (6S)-5,6,7,8-tetrahydrofolate + H(+)</text>
        <dbReference type="Rhea" id="RHEA:24380"/>
        <dbReference type="Rhea" id="RHEA-COMP:9952"/>
        <dbReference type="Rhea" id="RHEA-COMP:9953"/>
        <dbReference type="ChEBI" id="CHEBI:15378"/>
        <dbReference type="ChEBI" id="CHEBI:57453"/>
        <dbReference type="ChEBI" id="CHEBI:78530"/>
        <dbReference type="ChEBI" id="CHEBI:78844"/>
        <dbReference type="ChEBI" id="CHEBI:195366"/>
        <dbReference type="EC" id="2.1.2.9"/>
    </reaction>
</comment>
<comment type="similarity">
    <text evidence="1">Belongs to the Fmt family.</text>
</comment>
<gene>
    <name evidence="1" type="primary">fmt</name>
    <name type="ordered locus">P9215_10601</name>
</gene>
<protein>
    <recommendedName>
        <fullName evidence="1">Methionyl-tRNA formyltransferase</fullName>
        <ecNumber evidence="1">2.1.2.9</ecNumber>
    </recommendedName>
</protein>
<keyword id="KW-0648">Protein biosynthesis</keyword>
<keyword id="KW-0808">Transferase</keyword>
<accession>A8G4Z4</accession>
<evidence type="ECO:0000255" key="1">
    <source>
        <dbReference type="HAMAP-Rule" id="MF_00182"/>
    </source>
</evidence>
<sequence>MRIIFWGTPDYSISSLDILIKSNHEIIAVVSQPDKKRSRGNKLIASPIKSFAEQEYIKIYTPEKIRNNIPFINELKSLSCDLFIVIAYGKILPKEILEIPKFGCWNAHASLLPRWRGAAPIQWSLMKGDEYTGVGIMKMSEGLDTGDLLLEEKIKIDNTDNLNTLTEKLSILSAKLLLKAVSFLEKNINKKINSKLTKQNTLGREITYARMIEKSDFKVDWGNEAIKISRKIKALYPRANTNFRGKNLKILKIKVLTSDEIKNAKYHLMSNYSKPGIILAVIENEGIIISTKTDPIILLEAKIEGKNISTKKQLIQQLKPSVGEYFLD</sequence>